<gene>
    <name type="ordered locus">llmg_1596</name>
</gene>
<reference key="1">
    <citation type="journal article" date="2007" name="J. Bacteriol.">
        <title>The complete genome sequence of the lactic acid bacterial paradigm Lactococcus lactis subsp. cremoris MG1363.</title>
        <authorList>
            <person name="Wegmann U."/>
            <person name="O'Connell-Motherway M."/>
            <person name="Zomer A."/>
            <person name="Buist G."/>
            <person name="Shearman C."/>
            <person name="Canchaya C."/>
            <person name="Ventura M."/>
            <person name="Goesmann A."/>
            <person name="Gasson M.J."/>
            <person name="Kuipers O.P."/>
            <person name="van Sinderen D."/>
            <person name="Kok J."/>
        </authorList>
    </citation>
    <scope>NUCLEOTIDE SEQUENCE [LARGE SCALE GENOMIC DNA]</scope>
    <source>
        <strain>MG1363</strain>
    </source>
</reference>
<comment type="similarity">
    <text evidence="1">Belongs to the UPF0145 family.</text>
</comment>
<evidence type="ECO:0000255" key="1">
    <source>
        <dbReference type="HAMAP-Rule" id="MF_00338"/>
    </source>
</evidence>
<sequence length="108" mass="11829">MDDMLIVTTNEVAGYRIVEVYGEVFGLTTRSRNLFSSAGQQMKTVVGGEINGYTKLQHDTRETSIGRMKEEAKAKGANAIVAMRFDSSTFQNIDSVAAYGTAVKIEKI</sequence>
<protein>
    <recommendedName>
        <fullName evidence="1">UPF0145 protein llmg_1596</fullName>
    </recommendedName>
</protein>
<organism>
    <name type="scientific">Lactococcus lactis subsp. cremoris (strain MG1363)</name>
    <dbReference type="NCBI Taxonomy" id="416870"/>
    <lineage>
        <taxon>Bacteria</taxon>
        <taxon>Bacillati</taxon>
        <taxon>Bacillota</taxon>
        <taxon>Bacilli</taxon>
        <taxon>Lactobacillales</taxon>
        <taxon>Streptococcaceae</taxon>
        <taxon>Lactococcus</taxon>
        <taxon>Lactococcus cremoris subsp. cremoris</taxon>
    </lineage>
</organism>
<proteinExistence type="inferred from homology"/>
<accession>A2RLK2</accession>
<name>Y1596_LACLM</name>
<feature type="chain" id="PRO_1000013007" description="UPF0145 protein llmg_1596">
    <location>
        <begin position="1"/>
        <end position="108"/>
    </location>
</feature>
<dbReference type="EMBL" id="AM406671">
    <property type="protein sequence ID" value="CAL98170.1"/>
    <property type="molecule type" value="Genomic_DNA"/>
</dbReference>
<dbReference type="RefSeq" id="WP_011675885.1">
    <property type="nucleotide sequence ID" value="NC_009004.1"/>
</dbReference>
<dbReference type="SMR" id="A2RLK2"/>
<dbReference type="STRING" id="416870.llmg_1596"/>
<dbReference type="GeneID" id="61109232"/>
<dbReference type="KEGG" id="llm:llmg_1596"/>
<dbReference type="eggNOG" id="COG0393">
    <property type="taxonomic scope" value="Bacteria"/>
</dbReference>
<dbReference type="HOGENOM" id="CLU_117144_1_2_9"/>
<dbReference type="OrthoDB" id="9796448at2"/>
<dbReference type="PhylomeDB" id="A2RLK2"/>
<dbReference type="Proteomes" id="UP000000364">
    <property type="component" value="Chromosome"/>
</dbReference>
<dbReference type="Gene3D" id="3.30.110.70">
    <property type="entry name" value="Hypothetical protein apc22750. Chain B"/>
    <property type="match status" value="1"/>
</dbReference>
<dbReference type="HAMAP" id="MF_00338">
    <property type="entry name" value="UPF0145"/>
    <property type="match status" value="1"/>
</dbReference>
<dbReference type="InterPro" id="IPR035439">
    <property type="entry name" value="UPF0145_dom_sf"/>
</dbReference>
<dbReference type="InterPro" id="IPR002765">
    <property type="entry name" value="UPF0145_YbjQ-like"/>
</dbReference>
<dbReference type="PANTHER" id="PTHR34068:SF2">
    <property type="entry name" value="UPF0145 PROTEIN SCO3412"/>
    <property type="match status" value="1"/>
</dbReference>
<dbReference type="PANTHER" id="PTHR34068">
    <property type="entry name" value="UPF0145 PROTEIN YBJQ"/>
    <property type="match status" value="1"/>
</dbReference>
<dbReference type="Pfam" id="PF01906">
    <property type="entry name" value="YbjQ_1"/>
    <property type="match status" value="1"/>
</dbReference>
<dbReference type="SUPFAM" id="SSF117782">
    <property type="entry name" value="YbjQ-like"/>
    <property type="match status" value="1"/>
</dbReference>